<name>POTA_STRPM</name>
<feature type="chain" id="PRO_0000286310" description="Spermidine/putrescine import ATP-binding protein PotA">
    <location>
        <begin position="1"/>
        <end position="384"/>
    </location>
</feature>
<feature type="domain" description="ABC transporter" evidence="1">
    <location>
        <begin position="6"/>
        <end position="238"/>
    </location>
</feature>
<feature type="binding site" evidence="1">
    <location>
        <begin position="40"/>
        <end position="47"/>
    </location>
    <ligand>
        <name>ATP</name>
        <dbReference type="ChEBI" id="CHEBI:30616"/>
    </ligand>
</feature>
<sequence length="384" mass="43824">MTKPIITFNNVSKTFEDSGTQVLKNINFDLEEGKFYTLLGASGSGKSTILNIMAGLLDASSGDIYLDGERINDLPINKRDIHTVFQNYALFPHMTVFENVAFALKLKKVDKKEIAKRVKETLKMVQLEGYENRSIQKLSGGQRQRVAIARAIINQPRVVLLDEPLSALDLKLRTEMQYELRELQQRLGITFVFVTHDQEEALAMSDWVFVMNEGEIVQSGTPVDIYDEPINHFVANFIGESNIINGTMIEDYLVSFNGKEFESVDGGMRPNEPVEVVIRPEDLQITLPEEGKLQVKVDTQLFRGVHYEIIAYDELGNEWMIHSTRKAIEGEVIGLDFTPEDLHIMRLNETEEEFDARIEEYVEMDEPEDGLINAIEEERNEENL</sequence>
<evidence type="ECO:0000255" key="1">
    <source>
        <dbReference type="HAMAP-Rule" id="MF_01726"/>
    </source>
</evidence>
<comment type="function">
    <text evidence="1">Part of the ABC transporter complex PotABCD involved in spermidine/putrescine import. Responsible for energy coupling to the transport system.</text>
</comment>
<comment type="catalytic activity">
    <reaction evidence="1">
        <text>ATP + H2O + polyamine-[polyamine-binding protein]Side 1 = ADP + phosphate + polyamineSide 2 + [polyamine-binding protein]Side 1.</text>
        <dbReference type="EC" id="7.6.2.11"/>
    </reaction>
</comment>
<comment type="subunit">
    <text evidence="1">The complex is composed of two ATP-binding proteins (PotA), two transmembrane proteins (PotB and PotC) and a solute-binding protein (PotD).</text>
</comment>
<comment type="subcellular location">
    <subcellularLocation>
        <location evidence="1">Cell membrane</location>
        <topology evidence="1">Peripheral membrane protein</topology>
    </subcellularLocation>
</comment>
<comment type="similarity">
    <text evidence="1">Belongs to the ABC transporter superfamily. Spermidine/putrescine importer (TC 3.A.1.11.1) family.</text>
</comment>
<proteinExistence type="inferred from homology"/>
<reference key="1">
    <citation type="journal article" date="2005" name="J. Infect. Dis.">
        <title>Genome sequence of a serotype M28 strain of group A Streptococcus: potential new insights into puerperal sepsis and bacterial disease specificity.</title>
        <authorList>
            <person name="Green N.M."/>
            <person name="Zhang S."/>
            <person name="Porcella S.F."/>
            <person name="Nagiec M.J."/>
            <person name="Barbian K.D."/>
            <person name="Beres S.B."/>
            <person name="Lefebvre R.B."/>
            <person name="Musser J.M."/>
        </authorList>
    </citation>
    <scope>NUCLEOTIDE SEQUENCE [LARGE SCALE GENOMIC DNA]</scope>
    <source>
        <strain>MGAS6180</strain>
    </source>
</reference>
<dbReference type="EC" id="7.6.2.11" evidence="1"/>
<dbReference type="EMBL" id="CP000056">
    <property type="protein sequence ID" value="AAX71916.1"/>
    <property type="molecule type" value="Genomic_DNA"/>
</dbReference>
<dbReference type="RefSeq" id="WP_002984745.1">
    <property type="nucleotide sequence ID" value="NC_007296.2"/>
</dbReference>
<dbReference type="SMR" id="Q48TP4"/>
<dbReference type="KEGG" id="spb:M28_Spy0803"/>
<dbReference type="HOGENOM" id="CLU_000604_1_1_9"/>
<dbReference type="GO" id="GO:0043190">
    <property type="term" value="C:ATP-binding cassette (ABC) transporter complex"/>
    <property type="evidence" value="ECO:0007669"/>
    <property type="project" value="InterPro"/>
</dbReference>
<dbReference type="GO" id="GO:0015417">
    <property type="term" value="F:ABC-type polyamine transporter activity"/>
    <property type="evidence" value="ECO:0007669"/>
    <property type="project" value="UniProtKB-EC"/>
</dbReference>
<dbReference type="GO" id="GO:0005524">
    <property type="term" value="F:ATP binding"/>
    <property type="evidence" value="ECO:0007669"/>
    <property type="project" value="UniProtKB-KW"/>
</dbReference>
<dbReference type="GO" id="GO:0016887">
    <property type="term" value="F:ATP hydrolysis activity"/>
    <property type="evidence" value="ECO:0007669"/>
    <property type="project" value="InterPro"/>
</dbReference>
<dbReference type="FunFam" id="3.40.50.300:FF:000042">
    <property type="entry name" value="Maltose/maltodextrin ABC transporter, ATP-binding protein"/>
    <property type="match status" value="1"/>
</dbReference>
<dbReference type="Gene3D" id="2.40.50.100">
    <property type="match status" value="1"/>
</dbReference>
<dbReference type="Gene3D" id="3.40.50.300">
    <property type="entry name" value="P-loop containing nucleotide triphosphate hydrolases"/>
    <property type="match status" value="1"/>
</dbReference>
<dbReference type="InterPro" id="IPR003593">
    <property type="entry name" value="AAA+_ATPase"/>
</dbReference>
<dbReference type="InterPro" id="IPR050093">
    <property type="entry name" value="ABC_SmlMolc_Importer"/>
</dbReference>
<dbReference type="InterPro" id="IPR003439">
    <property type="entry name" value="ABC_transporter-like_ATP-bd"/>
</dbReference>
<dbReference type="InterPro" id="IPR017871">
    <property type="entry name" value="ABC_transporter-like_CS"/>
</dbReference>
<dbReference type="InterPro" id="IPR008995">
    <property type="entry name" value="Mo/tungstate-bd_C_term_dom"/>
</dbReference>
<dbReference type="InterPro" id="IPR027417">
    <property type="entry name" value="P-loop_NTPase"/>
</dbReference>
<dbReference type="InterPro" id="IPR005893">
    <property type="entry name" value="PotA-like"/>
</dbReference>
<dbReference type="InterPro" id="IPR013611">
    <property type="entry name" value="Transp-assoc_OB_typ2"/>
</dbReference>
<dbReference type="NCBIfam" id="TIGR01187">
    <property type="entry name" value="potA"/>
    <property type="match status" value="1"/>
</dbReference>
<dbReference type="PANTHER" id="PTHR42781">
    <property type="entry name" value="SPERMIDINE/PUTRESCINE IMPORT ATP-BINDING PROTEIN POTA"/>
    <property type="match status" value="1"/>
</dbReference>
<dbReference type="PANTHER" id="PTHR42781:SF4">
    <property type="entry name" value="SPERMIDINE_PUTRESCINE IMPORT ATP-BINDING PROTEIN POTA"/>
    <property type="match status" value="1"/>
</dbReference>
<dbReference type="Pfam" id="PF00005">
    <property type="entry name" value="ABC_tran"/>
    <property type="match status" value="1"/>
</dbReference>
<dbReference type="Pfam" id="PF08402">
    <property type="entry name" value="TOBE_2"/>
    <property type="match status" value="1"/>
</dbReference>
<dbReference type="SMART" id="SM00382">
    <property type="entry name" value="AAA"/>
    <property type="match status" value="1"/>
</dbReference>
<dbReference type="SUPFAM" id="SSF50331">
    <property type="entry name" value="MOP-like"/>
    <property type="match status" value="1"/>
</dbReference>
<dbReference type="SUPFAM" id="SSF52540">
    <property type="entry name" value="P-loop containing nucleoside triphosphate hydrolases"/>
    <property type="match status" value="1"/>
</dbReference>
<dbReference type="PROSITE" id="PS00211">
    <property type="entry name" value="ABC_TRANSPORTER_1"/>
    <property type="match status" value="1"/>
</dbReference>
<dbReference type="PROSITE" id="PS50893">
    <property type="entry name" value="ABC_TRANSPORTER_2"/>
    <property type="match status" value="1"/>
</dbReference>
<dbReference type="PROSITE" id="PS51305">
    <property type="entry name" value="POTA"/>
    <property type="match status" value="1"/>
</dbReference>
<protein>
    <recommendedName>
        <fullName evidence="1">Spermidine/putrescine import ATP-binding protein PotA</fullName>
        <ecNumber evidence="1">7.6.2.11</ecNumber>
    </recommendedName>
</protein>
<keyword id="KW-0067">ATP-binding</keyword>
<keyword id="KW-1003">Cell membrane</keyword>
<keyword id="KW-0472">Membrane</keyword>
<keyword id="KW-0547">Nucleotide-binding</keyword>
<keyword id="KW-1278">Translocase</keyword>
<keyword id="KW-0813">Transport</keyword>
<organism>
    <name type="scientific">Streptococcus pyogenes serotype M28 (strain MGAS6180)</name>
    <dbReference type="NCBI Taxonomy" id="319701"/>
    <lineage>
        <taxon>Bacteria</taxon>
        <taxon>Bacillati</taxon>
        <taxon>Bacillota</taxon>
        <taxon>Bacilli</taxon>
        <taxon>Lactobacillales</taxon>
        <taxon>Streptococcaceae</taxon>
        <taxon>Streptococcus</taxon>
    </lineage>
</organism>
<accession>Q48TP4</accession>
<gene>
    <name evidence="1" type="primary">potA</name>
    <name type="ordered locus">M28_Spy0803</name>
</gene>